<proteinExistence type="evidence at transcript level"/>
<dbReference type="EC" id="1.1.1.-"/>
<dbReference type="EMBL" id="AC004411">
    <property type="protein sequence ID" value="AAC34217.1"/>
    <property type="molecule type" value="Genomic_DNA"/>
</dbReference>
<dbReference type="EMBL" id="CP002685">
    <property type="protein sequence ID" value="AEC10805.1"/>
    <property type="molecule type" value="Genomic_DNA"/>
</dbReference>
<dbReference type="EMBL" id="BT010410">
    <property type="protein sequence ID" value="AAQ62411.1"/>
    <property type="molecule type" value="mRNA"/>
</dbReference>
<dbReference type="EMBL" id="AK175374">
    <property type="protein sequence ID" value="BAD43137.1"/>
    <property type="molecule type" value="mRNA"/>
</dbReference>
<dbReference type="PIR" id="T02175">
    <property type="entry name" value="T02175"/>
</dbReference>
<dbReference type="RefSeq" id="NP_182235.1">
    <property type="nucleotide sequence ID" value="NM_130281.5"/>
</dbReference>
<dbReference type="SMR" id="O80713"/>
<dbReference type="BioGRID" id="4661">
    <property type="interactions" value="2"/>
</dbReference>
<dbReference type="FunCoup" id="O80713">
    <property type="interactions" value="233"/>
</dbReference>
<dbReference type="IntAct" id="O80713">
    <property type="interactions" value="1"/>
</dbReference>
<dbReference type="STRING" id="3702.O80713"/>
<dbReference type="iPTMnet" id="O80713"/>
<dbReference type="PaxDb" id="3702-AT2G47130.1"/>
<dbReference type="ProteomicsDB" id="232953"/>
<dbReference type="EnsemblPlants" id="AT2G47130.1">
    <property type="protein sequence ID" value="AT2G47130.1"/>
    <property type="gene ID" value="AT2G47130"/>
</dbReference>
<dbReference type="GeneID" id="819326"/>
<dbReference type="Gramene" id="AT2G47130.1">
    <property type="protein sequence ID" value="AT2G47130.1"/>
    <property type="gene ID" value="AT2G47130"/>
</dbReference>
<dbReference type="KEGG" id="ath:AT2G47130"/>
<dbReference type="Araport" id="AT2G47130"/>
<dbReference type="TAIR" id="AT2G47130">
    <property type="gene designation" value="SDR3"/>
</dbReference>
<dbReference type="eggNOG" id="KOG0725">
    <property type="taxonomic scope" value="Eukaryota"/>
</dbReference>
<dbReference type="HOGENOM" id="CLU_010194_1_0_1"/>
<dbReference type="InParanoid" id="O80713"/>
<dbReference type="OMA" id="PHCGNYV"/>
<dbReference type="PhylomeDB" id="O80713"/>
<dbReference type="BioCyc" id="ARA:AT2G47130-MONOMER"/>
<dbReference type="PRO" id="PR:O80713"/>
<dbReference type="Proteomes" id="UP000006548">
    <property type="component" value="Chromosome 2"/>
</dbReference>
<dbReference type="ExpressionAtlas" id="O80713">
    <property type="expression patterns" value="baseline and differential"/>
</dbReference>
<dbReference type="GO" id="GO:0016491">
    <property type="term" value="F:oxidoreductase activity"/>
    <property type="evidence" value="ECO:0007669"/>
    <property type="project" value="UniProtKB-KW"/>
</dbReference>
<dbReference type="GO" id="GO:0042742">
    <property type="term" value="P:defense response to bacterium"/>
    <property type="evidence" value="ECO:0000315"/>
    <property type="project" value="TAIR"/>
</dbReference>
<dbReference type="GO" id="GO:0009626">
    <property type="term" value="P:plant-type hypersensitive response"/>
    <property type="evidence" value="ECO:0007669"/>
    <property type="project" value="UniProtKB-KW"/>
</dbReference>
<dbReference type="FunFam" id="3.40.50.720:FF:000084">
    <property type="entry name" value="Short-chain dehydrogenase reductase"/>
    <property type="match status" value="1"/>
</dbReference>
<dbReference type="Gene3D" id="3.40.50.720">
    <property type="entry name" value="NAD(P)-binding Rossmann-like Domain"/>
    <property type="match status" value="1"/>
</dbReference>
<dbReference type="InterPro" id="IPR036291">
    <property type="entry name" value="NAD(P)-bd_dom_sf"/>
</dbReference>
<dbReference type="InterPro" id="IPR002347">
    <property type="entry name" value="SDR_fam"/>
</dbReference>
<dbReference type="PANTHER" id="PTHR42820">
    <property type="entry name" value="SHORT-CHAIN DEHYDROGENASE REDUCTASE"/>
    <property type="match status" value="1"/>
</dbReference>
<dbReference type="PANTHER" id="PTHR42820:SF15">
    <property type="entry name" value="SHORT-CHAIN DEHYDROGENASE REDUCTASE 3A-RELATED"/>
    <property type="match status" value="1"/>
</dbReference>
<dbReference type="Pfam" id="PF13561">
    <property type="entry name" value="adh_short_C2"/>
    <property type="match status" value="1"/>
</dbReference>
<dbReference type="PRINTS" id="PR00081">
    <property type="entry name" value="GDHRDH"/>
</dbReference>
<dbReference type="PRINTS" id="PR00080">
    <property type="entry name" value="SDRFAMILY"/>
</dbReference>
<dbReference type="SUPFAM" id="SSF51735">
    <property type="entry name" value="NAD(P)-binding Rossmann-fold domains"/>
    <property type="match status" value="1"/>
</dbReference>
<sequence length="257" mass="26901">MSGLRLDGKIAIITGGASGIGAEAVRLFTDHGAKVVIVDFQEELGQNVAVSVGKDKASFYRCDVTNEKEVENAVKFTVEKYGKLDVLFSNAGVMEQPGSFLDLNLEQFDRTMAVNVRGAAAFIKHAARAMVEKGTRGSIVCTTSVASEIGGPGPHAYTASKHALLGLVKSACGGLGKYGIRVNGVAPYAVATAINSRDEETVRMVEEYSAATGILKGVVLKARHVAEAALFLASDDSAYVSGQNLAVDGGYSVVKPI</sequence>
<evidence type="ECO:0000250" key="1"/>
<evidence type="ECO:0000269" key="2">
    <source>
    </source>
</evidence>
<evidence type="ECO:0000305" key="3"/>
<comment type="function">
    <text evidence="2">Confers resistance to the incompatible pathogenic bacteria P.syringae pv. tomato DC3000 in a PR1-dependent manner. Seems not involved in abscisic acid (ABA) biosynthesis.</text>
</comment>
<comment type="tissue specificity">
    <text evidence="2">Highly expressed in the radicle tip, lateral root primordia and tips, and the area surrounding the cotyledon hydathode of young seedlings.</text>
</comment>
<comment type="induction">
    <text evidence="2">Accumulates upon Pseudomonas syringae infection and after treatment with systemic acquired resistance (SAR)-inducing chemicals, 1,2-benzisothiazol-3(2H)-one1,1-dioxide (BIT) and benzo-(1,2,3)thiadiazole-7-carbothioic acid S-methyl ester (BTH).</text>
</comment>
<comment type="disruption phenotype">
    <text evidence="2">No phenotype regarding abiotic stresses. Enhanced susceptibility to the incompatible pathogenic bacteria Pseudomonas syringae pv. tomato DC3000.</text>
</comment>
<comment type="similarity">
    <text evidence="3">Belongs to the short-chain dehydrogenases/reductases (SDR) family.</text>
</comment>
<feature type="chain" id="PRO_0000419511" description="Short-chain dehydrogenase reductase 3a">
    <location>
        <begin position="1"/>
        <end position="257"/>
    </location>
</feature>
<feature type="active site" description="Proton acceptor" evidence="1">
    <location>
        <position position="157"/>
    </location>
</feature>
<feature type="binding site" evidence="1">
    <location>
        <begin position="12"/>
        <end position="36"/>
    </location>
    <ligand>
        <name>NAD(+)</name>
        <dbReference type="ChEBI" id="CHEBI:57540"/>
    </ligand>
</feature>
<feature type="binding site" evidence="1">
    <location>
        <position position="144"/>
    </location>
    <ligand>
        <name>substrate</name>
    </ligand>
</feature>
<name>SDR3A_ARATH</name>
<protein>
    <recommendedName>
        <fullName>Short-chain dehydrogenase reductase 3a</fullName>
        <shortName>AtSDR3a</shortName>
        <ecNumber>1.1.1.-</ecNumber>
    </recommendedName>
</protein>
<reference key="1">
    <citation type="journal article" date="1999" name="Nature">
        <title>Sequence and analysis of chromosome 2 of the plant Arabidopsis thaliana.</title>
        <authorList>
            <person name="Lin X."/>
            <person name="Kaul S."/>
            <person name="Rounsley S.D."/>
            <person name="Shea T.P."/>
            <person name="Benito M.-I."/>
            <person name="Town C.D."/>
            <person name="Fujii C.Y."/>
            <person name="Mason T.M."/>
            <person name="Bowman C.L."/>
            <person name="Barnstead M.E."/>
            <person name="Feldblyum T.V."/>
            <person name="Buell C.R."/>
            <person name="Ketchum K.A."/>
            <person name="Lee J.J."/>
            <person name="Ronning C.M."/>
            <person name="Koo H.L."/>
            <person name="Moffat K.S."/>
            <person name="Cronin L.A."/>
            <person name="Shen M."/>
            <person name="Pai G."/>
            <person name="Van Aken S."/>
            <person name="Umayam L."/>
            <person name="Tallon L.J."/>
            <person name="Gill J.E."/>
            <person name="Adams M.D."/>
            <person name="Carrera A.J."/>
            <person name="Creasy T.H."/>
            <person name="Goodman H.M."/>
            <person name="Somerville C.R."/>
            <person name="Copenhaver G.P."/>
            <person name="Preuss D."/>
            <person name="Nierman W.C."/>
            <person name="White O."/>
            <person name="Eisen J.A."/>
            <person name="Salzberg S.L."/>
            <person name="Fraser C.M."/>
            <person name="Venter J.C."/>
        </authorList>
    </citation>
    <scope>NUCLEOTIDE SEQUENCE [LARGE SCALE GENOMIC DNA]</scope>
    <source>
        <strain>cv. Columbia</strain>
    </source>
</reference>
<reference key="2">
    <citation type="journal article" date="2017" name="Plant J.">
        <title>Araport11: a complete reannotation of the Arabidopsis thaliana reference genome.</title>
        <authorList>
            <person name="Cheng C.Y."/>
            <person name="Krishnakumar V."/>
            <person name="Chan A.P."/>
            <person name="Thibaud-Nissen F."/>
            <person name="Schobel S."/>
            <person name="Town C.D."/>
        </authorList>
    </citation>
    <scope>GENOME REANNOTATION</scope>
    <source>
        <strain>cv. Columbia</strain>
    </source>
</reference>
<reference key="3">
    <citation type="journal article" date="2003" name="Science">
        <title>Empirical analysis of transcriptional activity in the Arabidopsis genome.</title>
        <authorList>
            <person name="Yamada K."/>
            <person name="Lim J."/>
            <person name="Dale J.M."/>
            <person name="Chen H."/>
            <person name="Shinn P."/>
            <person name="Palm C.J."/>
            <person name="Southwick A.M."/>
            <person name="Wu H.C."/>
            <person name="Kim C.J."/>
            <person name="Nguyen M."/>
            <person name="Pham P.K."/>
            <person name="Cheuk R.F."/>
            <person name="Karlin-Newmann G."/>
            <person name="Liu S.X."/>
            <person name="Lam B."/>
            <person name="Sakano H."/>
            <person name="Wu T."/>
            <person name="Yu G."/>
            <person name="Miranda M."/>
            <person name="Quach H.L."/>
            <person name="Tripp M."/>
            <person name="Chang C.H."/>
            <person name="Lee J.M."/>
            <person name="Toriumi M.J."/>
            <person name="Chan M.M."/>
            <person name="Tang C.C."/>
            <person name="Onodera C.S."/>
            <person name="Deng J.M."/>
            <person name="Akiyama K."/>
            <person name="Ansari Y."/>
            <person name="Arakawa T."/>
            <person name="Banh J."/>
            <person name="Banno F."/>
            <person name="Bowser L."/>
            <person name="Brooks S.Y."/>
            <person name="Carninci P."/>
            <person name="Chao Q."/>
            <person name="Choy N."/>
            <person name="Enju A."/>
            <person name="Goldsmith A.D."/>
            <person name="Gurjal M."/>
            <person name="Hansen N.F."/>
            <person name="Hayashizaki Y."/>
            <person name="Johnson-Hopson C."/>
            <person name="Hsuan V.W."/>
            <person name="Iida K."/>
            <person name="Karnes M."/>
            <person name="Khan S."/>
            <person name="Koesema E."/>
            <person name="Ishida J."/>
            <person name="Jiang P.X."/>
            <person name="Jones T."/>
            <person name="Kawai J."/>
            <person name="Kamiya A."/>
            <person name="Meyers C."/>
            <person name="Nakajima M."/>
            <person name="Narusaka M."/>
            <person name="Seki M."/>
            <person name="Sakurai T."/>
            <person name="Satou M."/>
            <person name="Tamse R."/>
            <person name="Vaysberg M."/>
            <person name="Wallender E.K."/>
            <person name="Wong C."/>
            <person name="Yamamura Y."/>
            <person name="Yuan S."/>
            <person name="Shinozaki K."/>
            <person name="Davis R.W."/>
            <person name="Theologis A."/>
            <person name="Ecker J.R."/>
        </authorList>
    </citation>
    <scope>NUCLEOTIDE SEQUENCE [LARGE SCALE MRNA]</scope>
    <source>
        <strain>cv. Columbia</strain>
    </source>
</reference>
<reference key="4">
    <citation type="submission" date="2004-09" db="EMBL/GenBank/DDBJ databases">
        <title>Large-scale analysis of RIKEN Arabidopsis full-length (RAFL) cDNAs.</title>
        <authorList>
            <person name="Totoki Y."/>
            <person name="Seki M."/>
            <person name="Ishida J."/>
            <person name="Nakajima M."/>
            <person name="Enju A."/>
            <person name="Kamiya A."/>
            <person name="Narusaka M."/>
            <person name="Shin-i T."/>
            <person name="Nakagawa M."/>
            <person name="Sakamoto N."/>
            <person name="Oishi K."/>
            <person name="Kohara Y."/>
            <person name="Kobayashi M."/>
            <person name="Toyoda A."/>
            <person name="Sakaki Y."/>
            <person name="Sakurai T."/>
            <person name="Iida K."/>
            <person name="Akiyama K."/>
            <person name="Satou M."/>
            <person name="Toyoda T."/>
            <person name="Konagaya A."/>
            <person name="Carninci P."/>
            <person name="Kawai J."/>
            <person name="Hayashizaki Y."/>
            <person name="Shinozaki K."/>
        </authorList>
    </citation>
    <scope>NUCLEOTIDE SEQUENCE [LARGE SCALE MRNA]</scope>
    <source>
        <strain>cv. Columbia</strain>
    </source>
</reference>
<reference key="5">
    <citation type="journal article" date="2002" name="Plant Cell">
        <title>A unique short-chain dehydrogenase/reductase in Arabidopsis glucose signaling and abscisic acid biosynthesis and functions.</title>
        <authorList>
            <person name="Cheng W.-H."/>
            <person name="Endo A."/>
            <person name="Zhou L."/>
            <person name="Penney J."/>
            <person name="Chen H.-C."/>
            <person name="Arroyo A."/>
            <person name="Leon P."/>
            <person name="Nambara E."/>
            <person name="Asami T."/>
            <person name="Seo M."/>
            <person name="Koshiba T."/>
            <person name="Sheen J."/>
        </authorList>
    </citation>
    <scope>GENE FAMILY</scope>
    <scope>NOMENCLATURE</scope>
</reference>
<reference key="6">
    <citation type="journal article" date="2012" name="Plant Physiol. Biochem.">
        <title>The Arabidopsis short-chain dehydrogenase/reductase 3, an abscisic acid deficient 2 homolog, is involved in plant defense responses but not in ABA biosynthesis.</title>
        <authorList>
            <person name="Hwang S.-G."/>
            <person name="Lin N.-C."/>
            <person name="Hsiao Y.-Y."/>
            <person name="Kuo C.-H."/>
            <person name="Chang P.-F."/>
            <person name="Deng W.-L."/>
            <person name="Chiang M.-H."/>
            <person name="Shen H.-L."/>
            <person name="Chen C.-Y."/>
            <person name="Cheng W.-H."/>
        </authorList>
    </citation>
    <scope>FUNCTION</scope>
    <scope>DISRUPTION PHENOTYPE</scope>
    <scope>TISSUE SPECIFICITY</scope>
    <scope>INDUCTION BY PSEUDOMONAS SYRINGAE</scope>
</reference>
<organism>
    <name type="scientific">Arabidopsis thaliana</name>
    <name type="common">Mouse-ear cress</name>
    <dbReference type="NCBI Taxonomy" id="3702"/>
    <lineage>
        <taxon>Eukaryota</taxon>
        <taxon>Viridiplantae</taxon>
        <taxon>Streptophyta</taxon>
        <taxon>Embryophyta</taxon>
        <taxon>Tracheophyta</taxon>
        <taxon>Spermatophyta</taxon>
        <taxon>Magnoliopsida</taxon>
        <taxon>eudicotyledons</taxon>
        <taxon>Gunneridae</taxon>
        <taxon>Pentapetalae</taxon>
        <taxon>rosids</taxon>
        <taxon>malvids</taxon>
        <taxon>Brassicales</taxon>
        <taxon>Brassicaceae</taxon>
        <taxon>Camelineae</taxon>
        <taxon>Arabidopsis</taxon>
    </lineage>
</organism>
<keyword id="KW-0381">Hypersensitive response</keyword>
<keyword id="KW-0560">Oxidoreductase</keyword>
<keyword id="KW-0611">Plant defense</keyword>
<keyword id="KW-1185">Reference proteome</keyword>
<gene>
    <name type="primary">SDR3a</name>
    <name type="synonym">SDR3</name>
    <name type="synonym">SDR4</name>
    <name type="ordered locus">At2g47130</name>
    <name type="ORF">F14M4</name>
</gene>
<accession>O80713</accession>